<keyword id="KW-1185">Reference proteome</keyword>
<keyword id="KW-0687">Ribonucleoprotein</keyword>
<keyword id="KW-0689">Ribosomal protein</keyword>
<keyword id="KW-0694">RNA-binding</keyword>
<keyword id="KW-0699">rRNA-binding</keyword>
<protein>
    <recommendedName>
        <fullName evidence="1">Large ribosomal subunit protein bL9</fullName>
    </recommendedName>
    <alternativeName>
        <fullName evidence="2">50S ribosomal protein L9</fullName>
    </alternativeName>
</protein>
<organism>
    <name type="scientific">Bacillus licheniformis (strain ATCC 14580 / DSM 13 / JCM 2505 / CCUG 7422 / NBRC 12200 / NCIMB 9375 / NCTC 10341 / NRRL NRS-1264 / Gibson 46)</name>
    <dbReference type="NCBI Taxonomy" id="279010"/>
    <lineage>
        <taxon>Bacteria</taxon>
        <taxon>Bacillati</taxon>
        <taxon>Bacillota</taxon>
        <taxon>Bacilli</taxon>
        <taxon>Bacillales</taxon>
        <taxon>Bacillaceae</taxon>
        <taxon>Bacillus</taxon>
    </lineage>
</organism>
<reference key="1">
    <citation type="journal article" date="2004" name="J. Mol. Microbiol. Biotechnol.">
        <title>The complete genome sequence of Bacillus licheniformis DSM13, an organism with great industrial potential.</title>
        <authorList>
            <person name="Veith B."/>
            <person name="Herzberg C."/>
            <person name="Steckel S."/>
            <person name="Feesche J."/>
            <person name="Maurer K.H."/>
            <person name="Ehrenreich P."/>
            <person name="Baeumer S."/>
            <person name="Henne A."/>
            <person name="Liesegang H."/>
            <person name="Merkl R."/>
            <person name="Ehrenreich A."/>
            <person name="Gottschalk G."/>
        </authorList>
    </citation>
    <scope>NUCLEOTIDE SEQUENCE [LARGE SCALE GENOMIC DNA]</scope>
    <source>
        <strain>ATCC 14580 / DSM 13 / JCM 2505 / CCUG 7422 / NBRC 12200 / NCIMB 9375 / NCTC 10341 / NRRL NRS-1264 / Gibson 46</strain>
    </source>
</reference>
<reference key="2">
    <citation type="journal article" date="2004" name="Genome Biol.">
        <title>Complete genome sequence of the industrial bacterium Bacillus licheniformis and comparisons with closely related Bacillus species.</title>
        <authorList>
            <person name="Rey M.W."/>
            <person name="Ramaiya P."/>
            <person name="Nelson B.A."/>
            <person name="Brody-Karpin S.D."/>
            <person name="Zaretsky E.J."/>
            <person name="Tang M."/>
            <person name="Lopez de Leon A."/>
            <person name="Xiang H."/>
            <person name="Gusti V."/>
            <person name="Clausen I.G."/>
            <person name="Olsen P.B."/>
            <person name="Rasmussen M.D."/>
            <person name="Andersen J.T."/>
            <person name="Joergensen P.L."/>
            <person name="Larsen T.S."/>
            <person name="Sorokin A."/>
            <person name="Bolotin A."/>
            <person name="Lapidus A."/>
            <person name="Galleron N."/>
            <person name="Ehrlich S.D."/>
            <person name="Berka R.M."/>
        </authorList>
    </citation>
    <scope>NUCLEOTIDE SEQUENCE [LARGE SCALE GENOMIC DNA]</scope>
    <source>
        <strain>ATCC 14580 / DSM 13 / JCM 2505 / CCUG 7422 / NBRC 12200 / NCIMB 9375 / NCTC 10341 / NRRL NRS-1264 / Gibson 46</strain>
    </source>
</reference>
<comment type="function">
    <text evidence="1">Binds to the 23S rRNA.</text>
</comment>
<comment type="similarity">
    <text evidence="1">Belongs to the bacterial ribosomal protein bL9 family.</text>
</comment>
<name>RL9_BACLD</name>
<evidence type="ECO:0000255" key="1">
    <source>
        <dbReference type="HAMAP-Rule" id="MF_00503"/>
    </source>
</evidence>
<evidence type="ECO:0000305" key="2"/>
<proteinExistence type="inferred from homology"/>
<feature type="chain" id="PRO_0000236478" description="Large ribosomal subunit protein bL9">
    <location>
        <begin position="1"/>
        <end position="149"/>
    </location>
</feature>
<gene>
    <name evidence="1" type="primary">rplI</name>
    <name type="ordered locus">BLi04353</name>
    <name type="ordered locus">BL00092</name>
</gene>
<dbReference type="EMBL" id="AE017333">
    <property type="protein sequence ID" value="AAU43161.1"/>
    <property type="molecule type" value="Genomic_DNA"/>
</dbReference>
<dbReference type="EMBL" id="CP000002">
    <property type="protein sequence ID" value="AAU25780.1"/>
    <property type="molecule type" value="Genomic_DNA"/>
</dbReference>
<dbReference type="RefSeq" id="WP_003178003.1">
    <property type="nucleotide sequence ID" value="NC_006322.1"/>
</dbReference>
<dbReference type="SMR" id="Q65CQ3"/>
<dbReference type="STRING" id="279010.BL00092"/>
<dbReference type="GeneID" id="92859077"/>
<dbReference type="KEGG" id="bld:BLi04353"/>
<dbReference type="KEGG" id="bli:BL00092"/>
<dbReference type="eggNOG" id="COG0359">
    <property type="taxonomic scope" value="Bacteria"/>
</dbReference>
<dbReference type="HOGENOM" id="CLU_078938_3_2_9"/>
<dbReference type="Proteomes" id="UP000000606">
    <property type="component" value="Chromosome"/>
</dbReference>
<dbReference type="GO" id="GO:1990904">
    <property type="term" value="C:ribonucleoprotein complex"/>
    <property type="evidence" value="ECO:0007669"/>
    <property type="project" value="UniProtKB-KW"/>
</dbReference>
<dbReference type="GO" id="GO:0005840">
    <property type="term" value="C:ribosome"/>
    <property type="evidence" value="ECO:0007669"/>
    <property type="project" value="UniProtKB-KW"/>
</dbReference>
<dbReference type="GO" id="GO:0019843">
    <property type="term" value="F:rRNA binding"/>
    <property type="evidence" value="ECO:0007669"/>
    <property type="project" value="UniProtKB-UniRule"/>
</dbReference>
<dbReference type="GO" id="GO:0003735">
    <property type="term" value="F:structural constituent of ribosome"/>
    <property type="evidence" value="ECO:0007669"/>
    <property type="project" value="InterPro"/>
</dbReference>
<dbReference type="GO" id="GO:0006412">
    <property type="term" value="P:translation"/>
    <property type="evidence" value="ECO:0007669"/>
    <property type="project" value="UniProtKB-UniRule"/>
</dbReference>
<dbReference type="FunFam" id="3.10.430.100:FF:000002">
    <property type="entry name" value="50S ribosomal protein L9"/>
    <property type="match status" value="1"/>
</dbReference>
<dbReference type="FunFam" id="3.40.5.10:FF:000002">
    <property type="entry name" value="50S ribosomal protein L9"/>
    <property type="match status" value="1"/>
</dbReference>
<dbReference type="Gene3D" id="3.10.430.100">
    <property type="entry name" value="Ribosomal protein L9, C-terminal domain"/>
    <property type="match status" value="1"/>
</dbReference>
<dbReference type="Gene3D" id="3.40.5.10">
    <property type="entry name" value="Ribosomal protein L9, N-terminal domain"/>
    <property type="match status" value="1"/>
</dbReference>
<dbReference type="HAMAP" id="MF_00503">
    <property type="entry name" value="Ribosomal_bL9"/>
    <property type="match status" value="1"/>
</dbReference>
<dbReference type="InterPro" id="IPR000244">
    <property type="entry name" value="Ribosomal_bL9"/>
</dbReference>
<dbReference type="InterPro" id="IPR009027">
    <property type="entry name" value="Ribosomal_bL9/RNase_H1_N"/>
</dbReference>
<dbReference type="InterPro" id="IPR020594">
    <property type="entry name" value="Ribosomal_bL9_bac/chp"/>
</dbReference>
<dbReference type="InterPro" id="IPR020069">
    <property type="entry name" value="Ribosomal_bL9_C"/>
</dbReference>
<dbReference type="InterPro" id="IPR036791">
    <property type="entry name" value="Ribosomal_bL9_C_sf"/>
</dbReference>
<dbReference type="InterPro" id="IPR020070">
    <property type="entry name" value="Ribosomal_bL9_N"/>
</dbReference>
<dbReference type="InterPro" id="IPR036935">
    <property type="entry name" value="Ribosomal_bL9_N_sf"/>
</dbReference>
<dbReference type="NCBIfam" id="TIGR00158">
    <property type="entry name" value="L9"/>
    <property type="match status" value="1"/>
</dbReference>
<dbReference type="PANTHER" id="PTHR21368">
    <property type="entry name" value="50S RIBOSOMAL PROTEIN L9"/>
    <property type="match status" value="1"/>
</dbReference>
<dbReference type="Pfam" id="PF03948">
    <property type="entry name" value="Ribosomal_L9_C"/>
    <property type="match status" value="1"/>
</dbReference>
<dbReference type="Pfam" id="PF01281">
    <property type="entry name" value="Ribosomal_L9_N"/>
    <property type="match status" value="1"/>
</dbReference>
<dbReference type="SUPFAM" id="SSF55658">
    <property type="entry name" value="L9 N-domain-like"/>
    <property type="match status" value="1"/>
</dbReference>
<dbReference type="SUPFAM" id="SSF55653">
    <property type="entry name" value="Ribosomal protein L9 C-domain"/>
    <property type="match status" value="1"/>
</dbReference>
<dbReference type="PROSITE" id="PS00651">
    <property type="entry name" value="RIBOSOMAL_L9"/>
    <property type="match status" value="1"/>
</dbReference>
<accession>Q65CQ3</accession>
<accession>Q62N81</accession>
<sequence length="149" mass="16316">MKVIFLQDVKGKGKKGEVKNVADGYAHNFLIKKGLAVEATSANISALEGQKKKEKKEAAEELKSAKELKKQLEEITVELSAKSGEGGRLFGSVTSKQIADALQKGHQLKVDKRKIELNDAIRSLGYTNVPVKLHPEVQATLKVHVKEQS</sequence>